<gene>
    <name type="primary">MED26B</name>
    <name type="synonym">MED26_2</name>
    <name type="ordered locus">At5g05140</name>
    <name type="ORF">K2A11.1</name>
</gene>
<reference key="1">
    <citation type="journal article" date="1999" name="DNA Res.">
        <title>Structural analysis of Arabidopsis thaliana chromosome 5. IX. Sequence features of the regions of 1,011,550 bp covered by seventeen P1 and TAC clones.</title>
        <authorList>
            <person name="Kaneko T."/>
            <person name="Katoh T."/>
            <person name="Sato S."/>
            <person name="Nakamura Y."/>
            <person name="Asamizu E."/>
            <person name="Kotani H."/>
            <person name="Miyajima N."/>
            <person name="Tabata S."/>
        </authorList>
    </citation>
    <scope>NUCLEOTIDE SEQUENCE [LARGE SCALE GENOMIC DNA]</scope>
    <source>
        <strain>cv. Columbia</strain>
    </source>
</reference>
<reference key="2">
    <citation type="journal article" date="2017" name="Plant J.">
        <title>Araport11: a complete reannotation of the Arabidopsis thaliana reference genome.</title>
        <authorList>
            <person name="Cheng C.Y."/>
            <person name="Krishnakumar V."/>
            <person name="Chan A.P."/>
            <person name="Thibaud-Nissen F."/>
            <person name="Schobel S."/>
            <person name="Town C.D."/>
        </authorList>
    </citation>
    <scope>GENOME REANNOTATION</scope>
    <source>
        <strain>cv. Columbia</strain>
    </source>
</reference>
<reference key="3">
    <citation type="journal article" date="2003" name="Science">
        <title>Empirical analysis of transcriptional activity in the Arabidopsis genome.</title>
        <authorList>
            <person name="Yamada K."/>
            <person name="Lim J."/>
            <person name="Dale J.M."/>
            <person name="Chen H."/>
            <person name="Shinn P."/>
            <person name="Palm C.J."/>
            <person name="Southwick A.M."/>
            <person name="Wu H.C."/>
            <person name="Kim C.J."/>
            <person name="Nguyen M."/>
            <person name="Pham P.K."/>
            <person name="Cheuk R.F."/>
            <person name="Karlin-Newmann G."/>
            <person name="Liu S.X."/>
            <person name="Lam B."/>
            <person name="Sakano H."/>
            <person name="Wu T."/>
            <person name="Yu G."/>
            <person name="Miranda M."/>
            <person name="Quach H.L."/>
            <person name="Tripp M."/>
            <person name="Chang C.H."/>
            <person name="Lee J.M."/>
            <person name="Toriumi M.J."/>
            <person name="Chan M.M."/>
            <person name="Tang C.C."/>
            <person name="Onodera C.S."/>
            <person name="Deng J.M."/>
            <person name="Akiyama K."/>
            <person name="Ansari Y."/>
            <person name="Arakawa T."/>
            <person name="Banh J."/>
            <person name="Banno F."/>
            <person name="Bowser L."/>
            <person name="Brooks S.Y."/>
            <person name="Carninci P."/>
            <person name="Chao Q."/>
            <person name="Choy N."/>
            <person name="Enju A."/>
            <person name="Goldsmith A.D."/>
            <person name="Gurjal M."/>
            <person name="Hansen N.F."/>
            <person name="Hayashizaki Y."/>
            <person name="Johnson-Hopson C."/>
            <person name="Hsuan V.W."/>
            <person name="Iida K."/>
            <person name="Karnes M."/>
            <person name="Khan S."/>
            <person name="Koesema E."/>
            <person name="Ishida J."/>
            <person name="Jiang P.X."/>
            <person name="Jones T."/>
            <person name="Kawai J."/>
            <person name="Kamiya A."/>
            <person name="Meyers C."/>
            <person name="Nakajima M."/>
            <person name="Narusaka M."/>
            <person name="Seki M."/>
            <person name="Sakurai T."/>
            <person name="Satou M."/>
            <person name="Tamse R."/>
            <person name="Vaysberg M."/>
            <person name="Wallender E.K."/>
            <person name="Wong C."/>
            <person name="Yamamura Y."/>
            <person name="Yuan S."/>
            <person name="Shinozaki K."/>
            <person name="Davis R.W."/>
            <person name="Theologis A."/>
            <person name="Ecker J.R."/>
        </authorList>
    </citation>
    <scope>NUCLEOTIDE SEQUENCE [LARGE SCALE MRNA] OF 137-436</scope>
    <source>
        <strain>cv. Columbia</strain>
    </source>
</reference>
<reference key="4">
    <citation type="journal article" date="2011" name="Plant Physiol.">
        <title>The Mediator complex in plants: structure, phylogeny, and expression profiling of representative genes in a dicot (Arabidopsis) and a monocot (rice) during reproduction and abiotic stress.</title>
        <authorList>
            <person name="Mathur S."/>
            <person name="Vyas S."/>
            <person name="Kapoor S."/>
            <person name="Tyagi A.K."/>
        </authorList>
    </citation>
    <scope>IDENTIFICATION</scope>
    <scope>NOMENCLATURE</scope>
</reference>
<evidence type="ECO:0000250" key="1"/>
<evidence type="ECO:0000255" key="2"/>
<evidence type="ECO:0000255" key="3">
    <source>
        <dbReference type="PROSITE-ProRule" id="PRU00649"/>
    </source>
</evidence>
<evidence type="ECO:0000256" key="4">
    <source>
        <dbReference type="SAM" id="MobiDB-lite"/>
    </source>
</evidence>
<evidence type="ECO:0000305" key="5"/>
<sequence>MKASGSLDSWREYFRRRGDSDIFGIIDHAIMVAATDCPNKFKSRRDKIAELLFSCRVNRCVGCDHLELSVPGDDEANRGTTGNGGGGTAVDEDYEVAGGSKESKANSSRGDNNQIVSNYTFDEAEALSDEIEEFSVVSKEVARIKEILLNKEDEPNSVLLDSLRHLKLMSLNVDILKSTEIGKAVNGLRKHSSDKIRQLAKTLIAEWKELVDQWVNTTKEITGAEGTPESANPSVLDEEEAFPSLPYDVDIFTPEPNGFEISHFFDSLDFDGNPRNSEEHNTSREHERRPQNIAKRKPEGTQMRIQDAPFRSIKPSSATDFDGTRRPVKQSTEQRMKNETVSVHKSEKPMIQRKPVVTEQKRKAPGPQQEKLKGLDADAKFEFAKRKLQESYQHHENAKKQRTIQVLEMIPKQGSAQKPQLKRPGMSNRNWANGRK</sequence>
<proteinExistence type="evidence at transcript level"/>
<feature type="chain" id="PRO_0000418354" description="Probable mediator of RNA polymerase II transcription subunit 26b">
    <location>
        <begin position="1"/>
        <end position="436"/>
    </location>
</feature>
<feature type="domain" description="TFIIS N-terminal" evidence="3">
    <location>
        <begin position="139"/>
        <end position="214"/>
    </location>
</feature>
<feature type="region of interest" description="Disordered" evidence="4">
    <location>
        <begin position="71"/>
        <end position="111"/>
    </location>
</feature>
<feature type="region of interest" description="Disordered" evidence="4">
    <location>
        <begin position="263"/>
        <end position="376"/>
    </location>
</feature>
<feature type="region of interest" description="Disordered" evidence="4">
    <location>
        <begin position="408"/>
        <end position="436"/>
    </location>
</feature>
<feature type="coiled-coil region" evidence="2">
    <location>
        <begin position="382"/>
        <end position="402"/>
    </location>
</feature>
<feature type="compositionally biased region" description="Basic and acidic residues" evidence="4">
    <location>
        <begin position="276"/>
        <end position="290"/>
    </location>
</feature>
<feature type="compositionally biased region" description="Basic and acidic residues" evidence="4">
    <location>
        <begin position="332"/>
        <end position="350"/>
    </location>
</feature>
<feature type="compositionally biased region" description="Polar residues" evidence="4">
    <location>
        <begin position="427"/>
        <end position="436"/>
    </location>
</feature>
<name>MD26B_ARATH</name>
<keyword id="KW-0175">Coiled coil</keyword>
<keyword id="KW-0251">Elongation factor</keyword>
<keyword id="KW-0539">Nucleus</keyword>
<keyword id="KW-0648">Protein biosynthesis</keyword>
<keyword id="KW-1185">Reference proteome</keyword>
<keyword id="KW-0804">Transcription</keyword>
<keyword id="KW-0805">Transcription regulation</keyword>
<comment type="function">
    <text evidence="1">Component of the Mediator complex, a coactivator involved in the regulated transcription of nearly all RNA polymerase II-dependent genes. Mediator functions as a bridge to convey information from gene-specific regulatory proteins to the basal RNA polymerase II transcription machinery. The Mediator complex, having a compact conformation in its free form, is recruited to promoters by direct interactions with regulatory proteins and serves for the assembly of a functional preinitiation complex with RNA polymerase II and the general transcription factors (By similarity). May play a role in transcription elongation (By similarity).</text>
</comment>
<comment type="subunit">
    <text evidence="5">Component of the Mediator complex.</text>
</comment>
<comment type="subcellular location">
    <subcellularLocation>
        <location evidence="5">Nucleus</location>
    </subcellularLocation>
</comment>
<comment type="similarity">
    <text evidence="5">Belongs to the Mediator complex subunit 26 family.</text>
</comment>
<comment type="sequence caution" evidence="5">
    <conflict type="erroneous initiation">
        <sequence resource="EMBL-CDS" id="AAL32865"/>
    </conflict>
    <text>Truncated N-terminus.</text>
</comment>
<accession>Q9FHK9</accession>
<accession>Q8W477</accession>
<dbReference type="EMBL" id="AB018111">
    <property type="protein sequence ID" value="BAB09690.1"/>
    <property type="molecule type" value="Genomic_DNA"/>
</dbReference>
<dbReference type="EMBL" id="CP002688">
    <property type="protein sequence ID" value="AED90833.1"/>
    <property type="molecule type" value="Genomic_DNA"/>
</dbReference>
<dbReference type="EMBL" id="AY062787">
    <property type="protein sequence ID" value="AAL32865.1"/>
    <property type="status" value="ALT_INIT"/>
    <property type="molecule type" value="mRNA"/>
</dbReference>
<dbReference type="EMBL" id="AY081599">
    <property type="protein sequence ID" value="AAM10161.1"/>
    <property type="molecule type" value="mRNA"/>
</dbReference>
<dbReference type="RefSeq" id="NP_196133.3">
    <property type="nucleotide sequence ID" value="NM_120596.4"/>
</dbReference>
<dbReference type="SMR" id="Q9FHK9"/>
<dbReference type="FunCoup" id="Q9FHK9">
    <property type="interactions" value="1749"/>
</dbReference>
<dbReference type="STRING" id="3702.Q9FHK9"/>
<dbReference type="iPTMnet" id="Q9FHK9"/>
<dbReference type="PaxDb" id="3702-AT5G05140.1"/>
<dbReference type="ProteomicsDB" id="238327"/>
<dbReference type="EnsemblPlants" id="AT5G05140.1">
    <property type="protein sequence ID" value="AT5G05140.1"/>
    <property type="gene ID" value="AT5G05140"/>
</dbReference>
<dbReference type="GeneID" id="830396"/>
<dbReference type="Gramene" id="AT5G05140.1">
    <property type="protein sequence ID" value="AT5G05140.1"/>
    <property type="gene ID" value="AT5G05140"/>
</dbReference>
<dbReference type="KEGG" id="ath:AT5G05140"/>
<dbReference type="Araport" id="AT5G05140"/>
<dbReference type="TAIR" id="AT5G05140"/>
<dbReference type="eggNOG" id="ENOG502QR7F">
    <property type="taxonomic scope" value="Eukaryota"/>
</dbReference>
<dbReference type="HOGENOM" id="CLU_024836_2_0_1"/>
<dbReference type="InParanoid" id="Q9FHK9"/>
<dbReference type="OMA" id="HERRPQN"/>
<dbReference type="OrthoDB" id="44867at2759"/>
<dbReference type="PhylomeDB" id="Q9FHK9"/>
<dbReference type="PRO" id="PR:Q9FHK9"/>
<dbReference type="Proteomes" id="UP000006548">
    <property type="component" value="Chromosome 5"/>
</dbReference>
<dbReference type="ExpressionAtlas" id="Q9FHK9">
    <property type="expression patterns" value="baseline and differential"/>
</dbReference>
<dbReference type="GO" id="GO:0005634">
    <property type="term" value="C:nucleus"/>
    <property type="evidence" value="ECO:0007669"/>
    <property type="project" value="UniProtKB-SubCell"/>
</dbReference>
<dbReference type="GO" id="GO:0003746">
    <property type="term" value="F:translation elongation factor activity"/>
    <property type="evidence" value="ECO:0007669"/>
    <property type="project" value="UniProtKB-KW"/>
</dbReference>
<dbReference type="CDD" id="cd00183">
    <property type="entry name" value="TFIIS_I"/>
    <property type="match status" value="1"/>
</dbReference>
<dbReference type="Gene3D" id="1.20.930.10">
    <property type="entry name" value="Conserved domain common to transcription factors TFIIS, elongin A, CRSP70"/>
    <property type="match status" value="1"/>
</dbReference>
<dbReference type="InterPro" id="IPR003617">
    <property type="entry name" value="TFIIS/CRSP70_N_sub"/>
</dbReference>
<dbReference type="InterPro" id="IPR035441">
    <property type="entry name" value="TFIIS/LEDGF_dom_sf"/>
</dbReference>
<dbReference type="InterPro" id="IPR017923">
    <property type="entry name" value="TFIIS_N"/>
</dbReference>
<dbReference type="PANTHER" id="PTHR46554">
    <property type="entry name" value="MEDIATOR OF RNA POLYMERASE II TRANSCRIPTION SUBUNIT 26A-RELATED"/>
    <property type="match status" value="1"/>
</dbReference>
<dbReference type="PANTHER" id="PTHR46554:SF7">
    <property type="entry name" value="MEDIATOR OF RNA POLYMERASE II TRANSCRIPTION SUBUNIT 26B-RELATED"/>
    <property type="match status" value="1"/>
</dbReference>
<dbReference type="Pfam" id="PF08711">
    <property type="entry name" value="Med26"/>
    <property type="match status" value="1"/>
</dbReference>
<dbReference type="SMART" id="SM00509">
    <property type="entry name" value="TFS2N"/>
    <property type="match status" value="1"/>
</dbReference>
<dbReference type="SUPFAM" id="SSF47676">
    <property type="entry name" value="Conserved domain common to transcription factors TFIIS, elongin A, CRSP70"/>
    <property type="match status" value="1"/>
</dbReference>
<dbReference type="PROSITE" id="PS51319">
    <property type="entry name" value="TFIIS_N"/>
    <property type="match status" value="1"/>
</dbReference>
<organism>
    <name type="scientific">Arabidopsis thaliana</name>
    <name type="common">Mouse-ear cress</name>
    <dbReference type="NCBI Taxonomy" id="3702"/>
    <lineage>
        <taxon>Eukaryota</taxon>
        <taxon>Viridiplantae</taxon>
        <taxon>Streptophyta</taxon>
        <taxon>Embryophyta</taxon>
        <taxon>Tracheophyta</taxon>
        <taxon>Spermatophyta</taxon>
        <taxon>Magnoliopsida</taxon>
        <taxon>eudicotyledons</taxon>
        <taxon>Gunneridae</taxon>
        <taxon>Pentapetalae</taxon>
        <taxon>rosids</taxon>
        <taxon>malvids</taxon>
        <taxon>Brassicales</taxon>
        <taxon>Brassicaceae</taxon>
        <taxon>Camelineae</taxon>
        <taxon>Arabidopsis</taxon>
    </lineage>
</organism>
<protein>
    <recommendedName>
        <fullName>Probable mediator of RNA polymerase II transcription subunit 26b</fullName>
    </recommendedName>
</protein>